<sequence length="329" mass="35744">MKAAITATANYLPPDILSNHDLELMLDTNDEWIRSRTGIGERRILKDPTKATSYMCGEVARQLLEKRQLAATDIELIIVATITPDMPFPATACLVQDLIGAKNAWAFDLNAACSGFLYALNTAIRFVESGAHKKVMVIGADKMSSIIDYTDRATAILFGDGAGGVLVEPAADDSCGVLDVRLYSDGTNGRERLLMTGGGSRYPASHETVDKKMHYIYQDGRQVFKAAVTAMADVATEIMQRNNLTADDVAYLVPHQANQRIIDAIAERMGVDRAKVVSNVGYYGNTTAGTIPICLAELDANNKLKHGDNLVLVSFGAGYTWGGIYVKWQ</sequence>
<feature type="chain" id="PRO_1000056339" description="Beta-ketoacyl-[acyl-carrier-protein] synthase III">
    <location>
        <begin position="1"/>
        <end position="329"/>
    </location>
</feature>
<feature type="region of interest" description="ACP-binding" evidence="1">
    <location>
        <begin position="256"/>
        <end position="260"/>
    </location>
</feature>
<feature type="active site" evidence="1">
    <location>
        <position position="113"/>
    </location>
</feature>
<feature type="active site" evidence="1">
    <location>
        <position position="255"/>
    </location>
</feature>
<feature type="active site" evidence="1">
    <location>
        <position position="285"/>
    </location>
</feature>
<comment type="function">
    <text evidence="1">Catalyzes the condensation reaction of fatty acid synthesis by the addition to an acyl acceptor of two carbons from malonyl-ACP. Catalyzes the first condensation reaction which initiates fatty acid synthesis and may therefore play a role in governing the total rate of fatty acid production. Possesses both acetoacetyl-ACP synthase and acetyl transacylase activities. Its substrate specificity determines the biosynthesis of branched-chain and/or straight-chain of fatty acids.</text>
</comment>
<comment type="catalytic activity">
    <reaction evidence="1">
        <text>malonyl-[ACP] + acetyl-CoA + H(+) = 3-oxobutanoyl-[ACP] + CO2 + CoA</text>
        <dbReference type="Rhea" id="RHEA:12080"/>
        <dbReference type="Rhea" id="RHEA-COMP:9623"/>
        <dbReference type="Rhea" id="RHEA-COMP:9625"/>
        <dbReference type="ChEBI" id="CHEBI:15378"/>
        <dbReference type="ChEBI" id="CHEBI:16526"/>
        <dbReference type="ChEBI" id="CHEBI:57287"/>
        <dbReference type="ChEBI" id="CHEBI:57288"/>
        <dbReference type="ChEBI" id="CHEBI:78449"/>
        <dbReference type="ChEBI" id="CHEBI:78450"/>
        <dbReference type="EC" id="2.3.1.180"/>
    </reaction>
</comment>
<comment type="pathway">
    <text evidence="1">Lipid metabolism; fatty acid biosynthesis.</text>
</comment>
<comment type="subunit">
    <text evidence="1">Homodimer.</text>
</comment>
<comment type="subcellular location">
    <subcellularLocation>
        <location evidence="1">Cytoplasm</location>
    </subcellularLocation>
</comment>
<comment type="domain">
    <text evidence="1">The last Arg residue of the ACP-binding site is essential for the weak association between ACP/AcpP and FabH.</text>
</comment>
<comment type="similarity">
    <text evidence="1">Belongs to the thiolase-like superfamily. FabH family.</text>
</comment>
<evidence type="ECO:0000255" key="1">
    <source>
        <dbReference type="HAMAP-Rule" id="MF_01815"/>
    </source>
</evidence>
<protein>
    <recommendedName>
        <fullName evidence="1">Beta-ketoacyl-[acyl-carrier-protein] synthase III</fullName>
        <shortName evidence="1">Beta-ketoacyl-ACP synthase III</shortName>
        <shortName evidence="1">KAS III</shortName>
        <ecNumber evidence="1">2.3.1.180</ecNumber>
    </recommendedName>
    <alternativeName>
        <fullName evidence="1">3-oxoacyl-[acyl-carrier-protein] synthase 3</fullName>
    </alternativeName>
    <alternativeName>
        <fullName evidence="1">3-oxoacyl-[acyl-carrier-protein] synthase III</fullName>
    </alternativeName>
</protein>
<name>FABH_CHLCH</name>
<keyword id="KW-0012">Acyltransferase</keyword>
<keyword id="KW-0963">Cytoplasm</keyword>
<keyword id="KW-0275">Fatty acid biosynthesis</keyword>
<keyword id="KW-0276">Fatty acid metabolism</keyword>
<keyword id="KW-0444">Lipid biosynthesis</keyword>
<keyword id="KW-0443">Lipid metabolism</keyword>
<keyword id="KW-0511">Multifunctional enzyme</keyword>
<keyword id="KW-0808">Transferase</keyword>
<gene>
    <name evidence="1" type="primary">fabH</name>
    <name type="ordered locus">Cag_1664</name>
</gene>
<proteinExistence type="inferred from homology"/>
<dbReference type="EC" id="2.3.1.180" evidence="1"/>
<dbReference type="EMBL" id="CP000108">
    <property type="protein sequence ID" value="ABB28916.1"/>
    <property type="molecule type" value="Genomic_DNA"/>
</dbReference>
<dbReference type="SMR" id="Q3AQ09"/>
<dbReference type="STRING" id="340177.Cag_1664"/>
<dbReference type="KEGG" id="cch:Cag_1664"/>
<dbReference type="eggNOG" id="COG0332">
    <property type="taxonomic scope" value="Bacteria"/>
</dbReference>
<dbReference type="HOGENOM" id="CLU_039592_3_1_10"/>
<dbReference type="OrthoDB" id="9815506at2"/>
<dbReference type="UniPathway" id="UPA00094"/>
<dbReference type="GO" id="GO:0005737">
    <property type="term" value="C:cytoplasm"/>
    <property type="evidence" value="ECO:0007669"/>
    <property type="project" value="UniProtKB-SubCell"/>
</dbReference>
<dbReference type="GO" id="GO:0004315">
    <property type="term" value="F:3-oxoacyl-[acyl-carrier-protein] synthase activity"/>
    <property type="evidence" value="ECO:0007669"/>
    <property type="project" value="InterPro"/>
</dbReference>
<dbReference type="GO" id="GO:0033818">
    <property type="term" value="F:beta-ketoacyl-acyl-carrier-protein synthase III activity"/>
    <property type="evidence" value="ECO:0007669"/>
    <property type="project" value="UniProtKB-UniRule"/>
</dbReference>
<dbReference type="GO" id="GO:0006633">
    <property type="term" value="P:fatty acid biosynthetic process"/>
    <property type="evidence" value="ECO:0007669"/>
    <property type="project" value="UniProtKB-UniRule"/>
</dbReference>
<dbReference type="GO" id="GO:0044550">
    <property type="term" value="P:secondary metabolite biosynthetic process"/>
    <property type="evidence" value="ECO:0007669"/>
    <property type="project" value="TreeGrafter"/>
</dbReference>
<dbReference type="CDD" id="cd00830">
    <property type="entry name" value="KAS_III"/>
    <property type="match status" value="1"/>
</dbReference>
<dbReference type="FunFam" id="3.40.47.10:FF:000004">
    <property type="entry name" value="3-oxoacyl-[acyl-carrier-protein] synthase 3"/>
    <property type="match status" value="1"/>
</dbReference>
<dbReference type="Gene3D" id="3.40.47.10">
    <property type="match status" value="1"/>
</dbReference>
<dbReference type="HAMAP" id="MF_01815">
    <property type="entry name" value="FabH"/>
    <property type="match status" value="1"/>
</dbReference>
<dbReference type="InterPro" id="IPR013747">
    <property type="entry name" value="ACP_syn_III_C"/>
</dbReference>
<dbReference type="InterPro" id="IPR013751">
    <property type="entry name" value="ACP_syn_III_N"/>
</dbReference>
<dbReference type="InterPro" id="IPR004655">
    <property type="entry name" value="FabH"/>
</dbReference>
<dbReference type="InterPro" id="IPR016039">
    <property type="entry name" value="Thiolase-like"/>
</dbReference>
<dbReference type="NCBIfam" id="TIGR00747">
    <property type="entry name" value="fabH"/>
    <property type="match status" value="1"/>
</dbReference>
<dbReference type="NCBIfam" id="NF006829">
    <property type="entry name" value="PRK09352.1"/>
    <property type="match status" value="1"/>
</dbReference>
<dbReference type="PANTHER" id="PTHR34069">
    <property type="entry name" value="3-OXOACYL-[ACYL-CARRIER-PROTEIN] SYNTHASE 3"/>
    <property type="match status" value="1"/>
</dbReference>
<dbReference type="PANTHER" id="PTHR34069:SF2">
    <property type="entry name" value="BETA-KETOACYL-[ACYL-CARRIER-PROTEIN] SYNTHASE III"/>
    <property type="match status" value="1"/>
</dbReference>
<dbReference type="Pfam" id="PF08545">
    <property type="entry name" value="ACP_syn_III"/>
    <property type="match status" value="1"/>
</dbReference>
<dbReference type="Pfam" id="PF08541">
    <property type="entry name" value="ACP_syn_III_C"/>
    <property type="match status" value="1"/>
</dbReference>
<dbReference type="SUPFAM" id="SSF53901">
    <property type="entry name" value="Thiolase-like"/>
    <property type="match status" value="1"/>
</dbReference>
<reference key="1">
    <citation type="submission" date="2005-08" db="EMBL/GenBank/DDBJ databases">
        <title>Complete sequence of Chlorobium chlorochromatii CaD3.</title>
        <authorList>
            <consortium name="US DOE Joint Genome Institute"/>
            <person name="Copeland A."/>
            <person name="Lucas S."/>
            <person name="Lapidus A."/>
            <person name="Barry K."/>
            <person name="Detter J.C."/>
            <person name="Glavina T."/>
            <person name="Hammon N."/>
            <person name="Israni S."/>
            <person name="Pitluck S."/>
            <person name="Bryant D."/>
            <person name="Schmutz J."/>
            <person name="Larimer F."/>
            <person name="Land M."/>
            <person name="Kyrpides N."/>
            <person name="Ivanova N."/>
            <person name="Richardson P."/>
        </authorList>
    </citation>
    <scope>NUCLEOTIDE SEQUENCE [LARGE SCALE GENOMIC DNA]</scope>
    <source>
        <strain>CaD3</strain>
    </source>
</reference>
<accession>Q3AQ09</accession>
<organism>
    <name type="scientific">Chlorobium chlorochromatii (strain CaD3)</name>
    <dbReference type="NCBI Taxonomy" id="340177"/>
    <lineage>
        <taxon>Bacteria</taxon>
        <taxon>Pseudomonadati</taxon>
        <taxon>Chlorobiota</taxon>
        <taxon>Chlorobiia</taxon>
        <taxon>Chlorobiales</taxon>
        <taxon>Chlorobiaceae</taxon>
        <taxon>Chlorobium/Pelodictyon group</taxon>
        <taxon>Chlorobium</taxon>
    </lineage>
</organism>